<organism>
    <name type="scientific">Gemmatimonas aurantiaca (strain DSM 14586 / JCM 11422 / NBRC 100505 / T-27)</name>
    <dbReference type="NCBI Taxonomy" id="379066"/>
    <lineage>
        <taxon>Bacteria</taxon>
        <taxon>Pseudomonadati</taxon>
        <taxon>Gemmatimonadota</taxon>
        <taxon>Gemmatimonadia</taxon>
        <taxon>Gemmatimonadales</taxon>
        <taxon>Gemmatimonadaceae</taxon>
        <taxon>Gemmatimonas</taxon>
    </lineage>
</organism>
<dbReference type="EMBL" id="AP009153">
    <property type="protein sequence ID" value="BAH37675.1"/>
    <property type="molecule type" value="Genomic_DNA"/>
</dbReference>
<dbReference type="RefSeq" id="WP_012682122.1">
    <property type="nucleotide sequence ID" value="NC_012489.1"/>
</dbReference>
<dbReference type="SMR" id="C1A615"/>
<dbReference type="STRING" id="379066.GAU_0633"/>
<dbReference type="KEGG" id="gau:GAU_0633"/>
<dbReference type="eggNOG" id="COG0632">
    <property type="taxonomic scope" value="Bacteria"/>
</dbReference>
<dbReference type="HOGENOM" id="CLU_087936_0_0_0"/>
<dbReference type="OrthoDB" id="5293449at2"/>
<dbReference type="Proteomes" id="UP000002209">
    <property type="component" value="Chromosome"/>
</dbReference>
<dbReference type="GO" id="GO:0005737">
    <property type="term" value="C:cytoplasm"/>
    <property type="evidence" value="ECO:0007669"/>
    <property type="project" value="UniProtKB-SubCell"/>
</dbReference>
<dbReference type="GO" id="GO:0009379">
    <property type="term" value="C:Holliday junction helicase complex"/>
    <property type="evidence" value="ECO:0007669"/>
    <property type="project" value="InterPro"/>
</dbReference>
<dbReference type="GO" id="GO:0048476">
    <property type="term" value="C:Holliday junction resolvase complex"/>
    <property type="evidence" value="ECO:0007669"/>
    <property type="project" value="UniProtKB-UniRule"/>
</dbReference>
<dbReference type="GO" id="GO:0005524">
    <property type="term" value="F:ATP binding"/>
    <property type="evidence" value="ECO:0007669"/>
    <property type="project" value="InterPro"/>
</dbReference>
<dbReference type="GO" id="GO:0000400">
    <property type="term" value="F:four-way junction DNA binding"/>
    <property type="evidence" value="ECO:0007669"/>
    <property type="project" value="UniProtKB-UniRule"/>
</dbReference>
<dbReference type="GO" id="GO:0009378">
    <property type="term" value="F:four-way junction helicase activity"/>
    <property type="evidence" value="ECO:0007669"/>
    <property type="project" value="InterPro"/>
</dbReference>
<dbReference type="GO" id="GO:0006310">
    <property type="term" value="P:DNA recombination"/>
    <property type="evidence" value="ECO:0007669"/>
    <property type="project" value="UniProtKB-UniRule"/>
</dbReference>
<dbReference type="GO" id="GO:0006281">
    <property type="term" value="P:DNA repair"/>
    <property type="evidence" value="ECO:0007669"/>
    <property type="project" value="UniProtKB-UniRule"/>
</dbReference>
<dbReference type="CDD" id="cd14332">
    <property type="entry name" value="UBA_RuvA_C"/>
    <property type="match status" value="1"/>
</dbReference>
<dbReference type="Gene3D" id="1.10.150.20">
    <property type="entry name" value="5' to 3' exonuclease, C-terminal subdomain"/>
    <property type="match status" value="1"/>
</dbReference>
<dbReference type="Gene3D" id="1.10.8.10">
    <property type="entry name" value="DNA helicase RuvA subunit, C-terminal domain"/>
    <property type="match status" value="1"/>
</dbReference>
<dbReference type="Gene3D" id="2.40.50.140">
    <property type="entry name" value="Nucleic acid-binding proteins"/>
    <property type="match status" value="1"/>
</dbReference>
<dbReference type="HAMAP" id="MF_00031">
    <property type="entry name" value="DNA_HJ_migration_RuvA"/>
    <property type="match status" value="1"/>
</dbReference>
<dbReference type="InterPro" id="IPR013849">
    <property type="entry name" value="DNA_helicase_Holl-junc_RuvA_I"/>
</dbReference>
<dbReference type="InterPro" id="IPR003583">
    <property type="entry name" value="Hlx-hairpin-Hlx_DNA-bd_motif"/>
</dbReference>
<dbReference type="InterPro" id="IPR012340">
    <property type="entry name" value="NA-bd_OB-fold"/>
</dbReference>
<dbReference type="InterPro" id="IPR000085">
    <property type="entry name" value="RuvA"/>
</dbReference>
<dbReference type="InterPro" id="IPR010994">
    <property type="entry name" value="RuvA_2-like"/>
</dbReference>
<dbReference type="InterPro" id="IPR011114">
    <property type="entry name" value="RuvA_C"/>
</dbReference>
<dbReference type="InterPro" id="IPR036267">
    <property type="entry name" value="RuvA_C_sf"/>
</dbReference>
<dbReference type="NCBIfam" id="TIGR00084">
    <property type="entry name" value="ruvA"/>
    <property type="match status" value="1"/>
</dbReference>
<dbReference type="Pfam" id="PF14520">
    <property type="entry name" value="HHH_5"/>
    <property type="match status" value="1"/>
</dbReference>
<dbReference type="Pfam" id="PF07499">
    <property type="entry name" value="RuvA_C"/>
    <property type="match status" value="1"/>
</dbReference>
<dbReference type="Pfam" id="PF01330">
    <property type="entry name" value="RuvA_N"/>
    <property type="match status" value="1"/>
</dbReference>
<dbReference type="SMART" id="SM00278">
    <property type="entry name" value="HhH1"/>
    <property type="match status" value="2"/>
</dbReference>
<dbReference type="SUPFAM" id="SSF46929">
    <property type="entry name" value="DNA helicase RuvA subunit, C-terminal domain"/>
    <property type="match status" value="1"/>
</dbReference>
<dbReference type="SUPFAM" id="SSF50249">
    <property type="entry name" value="Nucleic acid-binding proteins"/>
    <property type="match status" value="1"/>
</dbReference>
<dbReference type="SUPFAM" id="SSF47781">
    <property type="entry name" value="RuvA domain 2-like"/>
    <property type="match status" value="1"/>
</dbReference>
<accession>C1A615</accession>
<proteinExistence type="inferred from homology"/>
<protein>
    <recommendedName>
        <fullName evidence="1">Holliday junction branch migration complex subunit RuvA</fullName>
    </recommendedName>
</protein>
<keyword id="KW-0963">Cytoplasm</keyword>
<keyword id="KW-0227">DNA damage</keyword>
<keyword id="KW-0233">DNA recombination</keyword>
<keyword id="KW-0234">DNA repair</keyword>
<keyword id="KW-0238">DNA-binding</keyword>
<keyword id="KW-1185">Reference proteome</keyword>
<reference key="1">
    <citation type="submission" date="2006-03" db="EMBL/GenBank/DDBJ databases">
        <title>Complete genome sequence of Gemmatimonas aurantiaca T-27 that represents a novel phylum Gemmatimonadetes.</title>
        <authorList>
            <person name="Takasaki K."/>
            <person name="Ichikawa N."/>
            <person name="Miura H."/>
            <person name="Matsushita S."/>
            <person name="Watanabe Y."/>
            <person name="Oguchi A."/>
            <person name="Ankai A."/>
            <person name="Yashiro I."/>
            <person name="Takahashi M."/>
            <person name="Terui Y."/>
            <person name="Fukui S."/>
            <person name="Yokoyama H."/>
            <person name="Tanikawa S."/>
            <person name="Hanada S."/>
            <person name="Kamagata Y."/>
            <person name="Fujita N."/>
        </authorList>
    </citation>
    <scope>NUCLEOTIDE SEQUENCE [LARGE SCALE GENOMIC DNA]</scope>
    <source>
        <strain>DSM 14586 / JCM 11422 / NBRC 100505 / T-27</strain>
    </source>
</reference>
<comment type="function">
    <text evidence="1">The RuvA-RuvB-RuvC complex processes Holliday junction (HJ) DNA during genetic recombination and DNA repair, while the RuvA-RuvB complex plays an important role in the rescue of blocked DNA replication forks via replication fork reversal (RFR). RuvA specifically binds to HJ cruciform DNA, conferring on it an open structure. The RuvB hexamer acts as an ATP-dependent pump, pulling dsDNA into and through the RuvAB complex. HJ branch migration allows RuvC to scan DNA until it finds its consensus sequence, where it cleaves and resolves the cruciform DNA.</text>
</comment>
<comment type="subunit">
    <text evidence="1">Homotetramer. Forms an RuvA(8)-RuvB(12)-Holliday junction (HJ) complex. HJ DNA is sandwiched between 2 RuvA tetramers; dsDNA enters through RuvA and exits via RuvB. An RuvB hexamer assembles on each DNA strand where it exits the tetramer. Each RuvB hexamer is contacted by two RuvA subunits (via domain III) on 2 adjacent RuvB subunits; this complex drives branch migration. In the full resolvosome a probable DNA-RuvA(4)-RuvB(12)-RuvC(2) complex forms which resolves the HJ.</text>
</comment>
<comment type="subcellular location">
    <subcellularLocation>
        <location evidence="1">Cytoplasm</location>
    </subcellularLocation>
</comment>
<comment type="domain">
    <text evidence="1">Has three domains with a flexible linker between the domains II and III and assumes an 'L' shape. Domain III is highly mobile and contacts RuvB.</text>
</comment>
<comment type="similarity">
    <text evidence="1">Belongs to the RuvA family.</text>
</comment>
<name>RUVA_GEMAT</name>
<feature type="chain" id="PRO_1000201991" description="Holliday junction branch migration complex subunit RuvA">
    <location>
        <begin position="1"/>
        <end position="197"/>
    </location>
</feature>
<feature type="region of interest" description="Domain I" evidence="1">
    <location>
        <begin position="1"/>
        <end position="65"/>
    </location>
</feature>
<feature type="region of interest" description="Domain II" evidence="1">
    <location>
        <begin position="66"/>
        <end position="140"/>
    </location>
</feature>
<feature type="region of interest" description="Flexible linker" evidence="1">
    <location>
        <begin position="140"/>
        <end position="144"/>
    </location>
</feature>
<feature type="region of interest" description="Domain III" evidence="1">
    <location>
        <begin position="145"/>
        <end position="197"/>
    </location>
</feature>
<gene>
    <name evidence="1" type="primary">ruvA</name>
    <name type="ordered locus">GAU_0633</name>
</gene>
<evidence type="ECO:0000255" key="1">
    <source>
        <dbReference type="HAMAP-Rule" id="MF_00031"/>
    </source>
</evidence>
<sequence>MISQVRGTIMHRELDRVEIMTASGVAYECLIPLSVFESLPSEGQTVTLHTHLVVREDAWHLYGFAHAYERAVFQKLLHAKGVGPALALGILSALTPDRVVRALHEKDVLTLMRVPRVGRKKAEQIILDLADKIDAVGPAPATGTAPSPLGDDAVRALIALGYNQTEADRAVRAVVESGAPKDVSSLVRGALSRLTAK</sequence>